<protein>
    <recommendedName>
        <fullName evidence="1">Elongation factor 4</fullName>
        <shortName evidence="1">EF-4</shortName>
        <ecNumber evidence="1">3.6.5.n1</ecNumber>
    </recommendedName>
    <alternativeName>
        <fullName evidence="1">Ribosomal back-translocase LepA</fullName>
    </alternativeName>
</protein>
<reference key="1">
    <citation type="journal article" date="2008" name="J. Bacteriol.">
        <title>Genome sequence of the chemolithoautotrophic bacterium Oligotropha carboxidovorans OM5T.</title>
        <authorList>
            <person name="Paul D."/>
            <person name="Bridges S."/>
            <person name="Burgess S.C."/>
            <person name="Dandass Y."/>
            <person name="Lawrence M.L."/>
        </authorList>
    </citation>
    <scope>NUCLEOTIDE SEQUENCE [LARGE SCALE GENOMIC DNA]</scope>
    <source>
        <strain>ATCC 49405 / DSM 1227 / KCTC 32145 / OM5</strain>
    </source>
</reference>
<reference key="2">
    <citation type="journal article" date="2011" name="J. Bacteriol.">
        <title>Complete genome sequences of the chemolithoautotrophic Oligotropha carboxidovorans strains OM4 and OM5.</title>
        <authorList>
            <person name="Volland S."/>
            <person name="Rachinger M."/>
            <person name="Strittmatter A."/>
            <person name="Daniel R."/>
            <person name="Gottschalk G."/>
            <person name="Meyer O."/>
        </authorList>
    </citation>
    <scope>NUCLEOTIDE SEQUENCE [LARGE SCALE GENOMIC DNA]</scope>
    <source>
        <strain>ATCC 49405 / DSM 1227 / KCTC 32145 / OM5</strain>
    </source>
</reference>
<sequence length="601" mass="66672">MTTTPISNVRNFSIVAHIDHGKSTLADRLIQTTGGLQDREMKEQVLDSMDIERERGITIKAQTVRLRYKAKDGKDYILNLMDTPGHVDFAYEVSRCLAACEGALLVVDASQGVEAQTLANVYQAIDNNLEIVPVLNKVDLPAAEPDQVKQQIEDVIGIDASEAIMVSAKTGIGIPDVLEAIVTRLPPPKGDRDATLKALLVDSWYDVYLGVVVLVRVVDGVLKKGDRIRMMGTNAAYDVERVGVFTPKMVNVDELGPGEVGFITAAIKEVADTRVGDTITDDRKPITEMLPGFKPAIPVVFCGLFPVDADDFETLRGAMGKLRLNDASFSFEMETSAALGFGFRCGFLGLLHLEIIQERLSREFNLNLIATAPSVIYKMHLTDGQEIEIHNPIDMPDVVKIAEIEEPWIEATIMTPDDYLGAVLKLCQERRGTQKELTYVGSRAMAKYELPLNEVVFDFYDRLKSVSKGYASFDYHLTDYKAADLVKMQILVNNEPVDALSMLVHRSRAEGRGRAMVEKMKELIPPHMFQIPIQAAIGGKVIARETVRALRKDVTAKCYGGDITRKRKLLEKQKEGKKKMRQFGKVDIPQEAFIAALKVDS</sequence>
<gene>
    <name evidence="1" type="primary">lepA</name>
    <name type="ordered locus">OCAR_7580</name>
    <name type="ordered locus">OCA5_c05630</name>
</gene>
<evidence type="ECO:0000255" key="1">
    <source>
        <dbReference type="HAMAP-Rule" id="MF_00071"/>
    </source>
</evidence>
<dbReference type="EC" id="3.6.5.n1" evidence="1"/>
<dbReference type="EMBL" id="CP001196">
    <property type="protein sequence ID" value="ACI94681.1"/>
    <property type="molecule type" value="Genomic_DNA"/>
</dbReference>
<dbReference type="EMBL" id="CP002826">
    <property type="protein sequence ID" value="AEI05287.1"/>
    <property type="molecule type" value="Genomic_DNA"/>
</dbReference>
<dbReference type="RefSeq" id="WP_012564705.1">
    <property type="nucleotide sequence ID" value="NC_015684.1"/>
</dbReference>
<dbReference type="SMR" id="B6JJT7"/>
<dbReference type="STRING" id="504832.OCA5_c05630"/>
<dbReference type="KEGG" id="oca:OCAR_7580"/>
<dbReference type="KEGG" id="ocg:OCA5_c05630"/>
<dbReference type="PATRIC" id="fig|504832.7.peg.589"/>
<dbReference type="eggNOG" id="COG0481">
    <property type="taxonomic scope" value="Bacteria"/>
</dbReference>
<dbReference type="HOGENOM" id="CLU_009995_3_3_5"/>
<dbReference type="OrthoDB" id="9802948at2"/>
<dbReference type="Proteomes" id="UP000007730">
    <property type="component" value="Chromosome"/>
</dbReference>
<dbReference type="GO" id="GO:0005886">
    <property type="term" value="C:plasma membrane"/>
    <property type="evidence" value="ECO:0007669"/>
    <property type="project" value="UniProtKB-SubCell"/>
</dbReference>
<dbReference type="GO" id="GO:0005525">
    <property type="term" value="F:GTP binding"/>
    <property type="evidence" value="ECO:0007669"/>
    <property type="project" value="UniProtKB-UniRule"/>
</dbReference>
<dbReference type="GO" id="GO:0003924">
    <property type="term" value="F:GTPase activity"/>
    <property type="evidence" value="ECO:0007669"/>
    <property type="project" value="UniProtKB-UniRule"/>
</dbReference>
<dbReference type="GO" id="GO:0097216">
    <property type="term" value="F:guanosine tetraphosphate binding"/>
    <property type="evidence" value="ECO:0007669"/>
    <property type="project" value="UniProtKB-ARBA"/>
</dbReference>
<dbReference type="GO" id="GO:0043022">
    <property type="term" value="F:ribosome binding"/>
    <property type="evidence" value="ECO:0007669"/>
    <property type="project" value="UniProtKB-UniRule"/>
</dbReference>
<dbReference type="GO" id="GO:0003746">
    <property type="term" value="F:translation elongation factor activity"/>
    <property type="evidence" value="ECO:0007669"/>
    <property type="project" value="UniProtKB-UniRule"/>
</dbReference>
<dbReference type="GO" id="GO:0045727">
    <property type="term" value="P:positive regulation of translation"/>
    <property type="evidence" value="ECO:0007669"/>
    <property type="project" value="UniProtKB-UniRule"/>
</dbReference>
<dbReference type="CDD" id="cd16260">
    <property type="entry name" value="EF4_III"/>
    <property type="match status" value="1"/>
</dbReference>
<dbReference type="CDD" id="cd01890">
    <property type="entry name" value="LepA"/>
    <property type="match status" value="1"/>
</dbReference>
<dbReference type="CDD" id="cd03709">
    <property type="entry name" value="lepA_C"/>
    <property type="match status" value="1"/>
</dbReference>
<dbReference type="FunFam" id="3.40.50.300:FF:000078">
    <property type="entry name" value="Elongation factor 4"/>
    <property type="match status" value="1"/>
</dbReference>
<dbReference type="FunFam" id="2.40.30.10:FF:000015">
    <property type="entry name" value="Translation factor GUF1, mitochondrial"/>
    <property type="match status" value="1"/>
</dbReference>
<dbReference type="FunFam" id="3.30.70.240:FF:000007">
    <property type="entry name" value="Translation factor GUF1, mitochondrial"/>
    <property type="match status" value="1"/>
</dbReference>
<dbReference type="FunFam" id="3.30.70.2570:FF:000001">
    <property type="entry name" value="Translation factor GUF1, mitochondrial"/>
    <property type="match status" value="1"/>
</dbReference>
<dbReference type="FunFam" id="3.30.70.870:FF:000004">
    <property type="entry name" value="Translation factor GUF1, mitochondrial"/>
    <property type="match status" value="1"/>
</dbReference>
<dbReference type="Gene3D" id="3.30.70.240">
    <property type="match status" value="1"/>
</dbReference>
<dbReference type="Gene3D" id="3.30.70.2570">
    <property type="entry name" value="Elongation factor 4, C-terminal domain"/>
    <property type="match status" value="1"/>
</dbReference>
<dbReference type="Gene3D" id="3.30.70.870">
    <property type="entry name" value="Elongation Factor G (Translational Gtpase), domain 3"/>
    <property type="match status" value="1"/>
</dbReference>
<dbReference type="Gene3D" id="3.40.50.300">
    <property type="entry name" value="P-loop containing nucleotide triphosphate hydrolases"/>
    <property type="match status" value="1"/>
</dbReference>
<dbReference type="Gene3D" id="2.40.30.10">
    <property type="entry name" value="Translation factors"/>
    <property type="match status" value="1"/>
</dbReference>
<dbReference type="HAMAP" id="MF_00071">
    <property type="entry name" value="LepA"/>
    <property type="match status" value="1"/>
</dbReference>
<dbReference type="InterPro" id="IPR006297">
    <property type="entry name" value="EF-4"/>
</dbReference>
<dbReference type="InterPro" id="IPR035647">
    <property type="entry name" value="EFG_III/V"/>
</dbReference>
<dbReference type="InterPro" id="IPR000640">
    <property type="entry name" value="EFG_V-like"/>
</dbReference>
<dbReference type="InterPro" id="IPR004161">
    <property type="entry name" value="EFTu-like_2"/>
</dbReference>
<dbReference type="InterPro" id="IPR031157">
    <property type="entry name" value="G_TR_CS"/>
</dbReference>
<dbReference type="InterPro" id="IPR038363">
    <property type="entry name" value="LepA_C_sf"/>
</dbReference>
<dbReference type="InterPro" id="IPR013842">
    <property type="entry name" value="LepA_CTD"/>
</dbReference>
<dbReference type="InterPro" id="IPR035654">
    <property type="entry name" value="LepA_IV"/>
</dbReference>
<dbReference type="InterPro" id="IPR027417">
    <property type="entry name" value="P-loop_NTPase"/>
</dbReference>
<dbReference type="InterPro" id="IPR005225">
    <property type="entry name" value="Small_GTP-bd"/>
</dbReference>
<dbReference type="InterPro" id="IPR000795">
    <property type="entry name" value="T_Tr_GTP-bd_dom"/>
</dbReference>
<dbReference type="NCBIfam" id="TIGR01393">
    <property type="entry name" value="lepA"/>
    <property type="match status" value="1"/>
</dbReference>
<dbReference type="NCBIfam" id="TIGR00231">
    <property type="entry name" value="small_GTP"/>
    <property type="match status" value="1"/>
</dbReference>
<dbReference type="PANTHER" id="PTHR43512:SF4">
    <property type="entry name" value="TRANSLATION FACTOR GUF1 HOMOLOG, CHLOROPLASTIC"/>
    <property type="match status" value="1"/>
</dbReference>
<dbReference type="PANTHER" id="PTHR43512">
    <property type="entry name" value="TRANSLATION FACTOR GUF1-RELATED"/>
    <property type="match status" value="1"/>
</dbReference>
<dbReference type="Pfam" id="PF00679">
    <property type="entry name" value="EFG_C"/>
    <property type="match status" value="1"/>
</dbReference>
<dbReference type="Pfam" id="PF00009">
    <property type="entry name" value="GTP_EFTU"/>
    <property type="match status" value="1"/>
</dbReference>
<dbReference type="Pfam" id="PF03144">
    <property type="entry name" value="GTP_EFTU_D2"/>
    <property type="match status" value="1"/>
</dbReference>
<dbReference type="Pfam" id="PF06421">
    <property type="entry name" value="LepA_C"/>
    <property type="match status" value="1"/>
</dbReference>
<dbReference type="PRINTS" id="PR00315">
    <property type="entry name" value="ELONGATNFCT"/>
</dbReference>
<dbReference type="SMART" id="SM00838">
    <property type="entry name" value="EFG_C"/>
    <property type="match status" value="1"/>
</dbReference>
<dbReference type="SUPFAM" id="SSF54980">
    <property type="entry name" value="EF-G C-terminal domain-like"/>
    <property type="match status" value="2"/>
</dbReference>
<dbReference type="SUPFAM" id="SSF52540">
    <property type="entry name" value="P-loop containing nucleoside triphosphate hydrolases"/>
    <property type="match status" value="1"/>
</dbReference>
<dbReference type="PROSITE" id="PS00301">
    <property type="entry name" value="G_TR_1"/>
    <property type="match status" value="1"/>
</dbReference>
<dbReference type="PROSITE" id="PS51722">
    <property type="entry name" value="G_TR_2"/>
    <property type="match status" value="1"/>
</dbReference>
<comment type="function">
    <text evidence="1">Required for accurate and efficient protein synthesis under certain stress conditions. May act as a fidelity factor of the translation reaction, by catalyzing a one-codon backward translocation of tRNAs on improperly translocated ribosomes. Back-translocation proceeds from a post-translocation (POST) complex to a pre-translocation (PRE) complex, thus giving elongation factor G a second chance to translocate the tRNAs correctly. Binds to ribosomes in a GTP-dependent manner.</text>
</comment>
<comment type="catalytic activity">
    <reaction evidence="1">
        <text>GTP + H2O = GDP + phosphate + H(+)</text>
        <dbReference type="Rhea" id="RHEA:19669"/>
        <dbReference type="ChEBI" id="CHEBI:15377"/>
        <dbReference type="ChEBI" id="CHEBI:15378"/>
        <dbReference type="ChEBI" id="CHEBI:37565"/>
        <dbReference type="ChEBI" id="CHEBI:43474"/>
        <dbReference type="ChEBI" id="CHEBI:58189"/>
        <dbReference type="EC" id="3.6.5.n1"/>
    </reaction>
</comment>
<comment type="subcellular location">
    <subcellularLocation>
        <location evidence="1">Cell inner membrane</location>
        <topology evidence="1">Peripheral membrane protein</topology>
        <orientation evidence="1">Cytoplasmic side</orientation>
    </subcellularLocation>
</comment>
<comment type="similarity">
    <text evidence="1">Belongs to the TRAFAC class translation factor GTPase superfamily. Classic translation factor GTPase family. LepA subfamily.</text>
</comment>
<organism>
    <name type="scientific">Afipia carboxidovorans (strain ATCC 49405 / DSM 1227 / KCTC 32145 / OM5)</name>
    <name type="common">Oligotropha carboxidovorans</name>
    <dbReference type="NCBI Taxonomy" id="504832"/>
    <lineage>
        <taxon>Bacteria</taxon>
        <taxon>Pseudomonadati</taxon>
        <taxon>Pseudomonadota</taxon>
        <taxon>Alphaproteobacteria</taxon>
        <taxon>Hyphomicrobiales</taxon>
        <taxon>Nitrobacteraceae</taxon>
        <taxon>Afipia</taxon>
    </lineage>
</organism>
<name>LEPA_AFIC5</name>
<accession>B6JJT7</accession>
<accession>F8BWE9</accession>
<keyword id="KW-0997">Cell inner membrane</keyword>
<keyword id="KW-1003">Cell membrane</keyword>
<keyword id="KW-0342">GTP-binding</keyword>
<keyword id="KW-0378">Hydrolase</keyword>
<keyword id="KW-0472">Membrane</keyword>
<keyword id="KW-0547">Nucleotide-binding</keyword>
<keyword id="KW-0648">Protein biosynthesis</keyword>
<keyword id="KW-1185">Reference proteome</keyword>
<feature type="chain" id="PRO_1000092421" description="Elongation factor 4">
    <location>
        <begin position="1"/>
        <end position="601"/>
    </location>
</feature>
<feature type="domain" description="tr-type G">
    <location>
        <begin position="7"/>
        <end position="189"/>
    </location>
</feature>
<feature type="binding site" evidence="1">
    <location>
        <begin position="19"/>
        <end position="24"/>
    </location>
    <ligand>
        <name>GTP</name>
        <dbReference type="ChEBI" id="CHEBI:37565"/>
    </ligand>
</feature>
<feature type="binding site" evidence="1">
    <location>
        <begin position="136"/>
        <end position="139"/>
    </location>
    <ligand>
        <name>GTP</name>
        <dbReference type="ChEBI" id="CHEBI:37565"/>
    </ligand>
</feature>
<proteinExistence type="inferred from homology"/>